<keyword id="KW-0963">Cytoplasm</keyword>
<keyword id="KW-0560">Oxidoreductase</keyword>
<comment type="function">
    <text evidence="1">Catalyzes the formation of sulfite from phosphoadenosine 5'-phosphosulfate (PAPS) using thioredoxin as an electron donor.</text>
</comment>
<comment type="catalytic activity">
    <reaction evidence="1">
        <text>[thioredoxin]-disulfide + sulfite + adenosine 3',5'-bisphosphate + 2 H(+) = [thioredoxin]-dithiol + 3'-phosphoadenylyl sulfate</text>
        <dbReference type="Rhea" id="RHEA:11724"/>
        <dbReference type="Rhea" id="RHEA-COMP:10698"/>
        <dbReference type="Rhea" id="RHEA-COMP:10700"/>
        <dbReference type="ChEBI" id="CHEBI:15378"/>
        <dbReference type="ChEBI" id="CHEBI:17359"/>
        <dbReference type="ChEBI" id="CHEBI:29950"/>
        <dbReference type="ChEBI" id="CHEBI:50058"/>
        <dbReference type="ChEBI" id="CHEBI:58339"/>
        <dbReference type="ChEBI" id="CHEBI:58343"/>
        <dbReference type="EC" id="1.8.4.8"/>
    </reaction>
</comment>
<comment type="pathway">
    <text evidence="1">Sulfur metabolism; hydrogen sulfide biosynthesis; sulfite from sulfate: step 3/3.</text>
</comment>
<comment type="subcellular location">
    <subcellularLocation>
        <location evidence="1">Cytoplasm</location>
    </subcellularLocation>
</comment>
<comment type="similarity">
    <text evidence="1">Belongs to the PAPS reductase family. CysH subfamily.</text>
</comment>
<name>CYSH_ECOUT</name>
<proteinExistence type="inferred from homology"/>
<feature type="chain" id="PRO_1000008923" description="Phosphoadenosine 5'-phosphosulfate reductase">
    <location>
        <begin position="1"/>
        <end position="244"/>
    </location>
</feature>
<feature type="active site" description="Nucleophile; cysteine thiosulfonate intermediate" evidence="1">
    <location>
        <position position="239"/>
    </location>
</feature>
<accession>Q1R7T6</accession>
<sequence>MSKLDLNALNELPKVDRILALAETNAQLEKLDAEGRVAWALDNLPGEYVLSSSFGIQAAVSLHLVNQIRPDIPVILTDTGYLFPETYRFIDELTDKLKLNLKVYRATESAAWQEARYGKLWEQGVEGIEKYNDINKVEPMNRALKELNVQTWFAGLRREQSGSRANLPVLAIQRGVFKVLPIIDWDNRTIYQYLQKHGLKYHPLWDEGYLSVGDTHTTRKWEPGMAEEETRFFGLKRECGLHEG</sequence>
<organism>
    <name type="scientific">Escherichia coli (strain UTI89 / UPEC)</name>
    <dbReference type="NCBI Taxonomy" id="364106"/>
    <lineage>
        <taxon>Bacteria</taxon>
        <taxon>Pseudomonadati</taxon>
        <taxon>Pseudomonadota</taxon>
        <taxon>Gammaproteobacteria</taxon>
        <taxon>Enterobacterales</taxon>
        <taxon>Enterobacteriaceae</taxon>
        <taxon>Escherichia</taxon>
    </lineage>
</organism>
<reference key="1">
    <citation type="journal article" date="2006" name="Proc. Natl. Acad. Sci. U.S.A.">
        <title>Identification of genes subject to positive selection in uropathogenic strains of Escherichia coli: a comparative genomics approach.</title>
        <authorList>
            <person name="Chen S.L."/>
            <person name="Hung C.-S."/>
            <person name="Xu J."/>
            <person name="Reigstad C.S."/>
            <person name="Magrini V."/>
            <person name="Sabo A."/>
            <person name="Blasiar D."/>
            <person name="Bieri T."/>
            <person name="Meyer R.R."/>
            <person name="Ozersky P."/>
            <person name="Armstrong J.R."/>
            <person name="Fulton R.S."/>
            <person name="Latreille J.P."/>
            <person name="Spieth J."/>
            <person name="Hooton T.M."/>
            <person name="Mardis E.R."/>
            <person name="Hultgren S.J."/>
            <person name="Gordon J.I."/>
        </authorList>
    </citation>
    <scope>NUCLEOTIDE SEQUENCE [LARGE SCALE GENOMIC DNA]</scope>
    <source>
        <strain>UTI89 / UPEC</strain>
    </source>
</reference>
<evidence type="ECO:0000255" key="1">
    <source>
        <dbReference type="HAMAP-Rule" id="MF_00063"/>
    </source>
</evidence>
<protein>
    <recommendedName>
        <fullName evidence="1">Phosphoadenosine 5'-phosphosulfate reductase</fullName>
        <shortName evidence="1">PAPS reductase</shortName>
        <ecNumber evidence="1">1.8.4.8</ecNumber>
    </recommendedName>
    <alternativeName>
        <fullName evidence="1">3'-phosphoadenylylsulfate reductase</fullName>
    </alternativeName>
    <alternativeName>
        <fullName evidence="1">PAPS reductase, thioredoxin dependent</fullName>
    </alternativeName>
    <alternativeName>
        <fullName evidence="1">PAPS sulfotransferase</fullName>
    </alternativeName>
    <alternativeName>
        <fullName evidence="1">PAdoPS reductase</fullName>
    </alternativeName>
</protein>
<gene>
    <name evidence="1" type="primary">cysH</name>
    <name type="ordered locus">UTI89_C3126</name>
</gene>
<dbReference type="EC" id="1.8.4.8" evidence="1"/>
<dbReference type="EMBL" id="CP000243">
    <property type="protein sequence ID" value="ABE08578.1"/>
    <property type="molecule type" value="Genomic_DNA"/>
</dbReference>
<dbReference type="RefSeq" id="WP_000039865.1">
    <property type="nucleotide sequence ID" value="NZ_CP064825.1"/>
</dbReference>
<dbReference type="SMR" id="Q1R7T6"/>
<dbReference type="KEGG" id="eci:UTI89_C3126"/>
<dbReference type="HOGENOM" id="CLU_044089_3_0_6"/>
<dbReference type="UniPathway" id="UPA00140">
    <property type="reaction ID" value="UER00206"/>
</dbReference>
<dbReference type="Proteomes" id="UP000001952">
    <property type="component" value="Chromosome"/>
</dbReference>
<dbReference type="GO" id="GO:0005737">
    <property type="term" value="C:cytoplasm"/>
    <property type="evidence" value="ECO:0007669"/>
    <property type="project" value="UniProtKB-SubCell"/>
</dbReference>
<dbReference type="GO" id="GO:0004604">
    <property type="term" value="F:phosphoadenylyl-sulfate reductase (thioredoxin) activity"/>
    <property type="evidence" value="ECO:0007669"/>
    <property type="project" value="UniProtKB-UniRule"/>
</dbReference>
<dbReference type="GO" id="GO:0070814">
    <property type="term" value="P:hydrogen sulfide biosynthetic process"/>
    <property type="evidence" value="ECO:0007669"/>
    <property type="project" value="UniProtKB-UniRule"/>
</dbReference>
<dbReference type="GO" id="GO:0019379">
    <property type="term" value="P:sulfate assimilation, phosphoadenylyl sulfate reduction by phosphoadenylyl-sulfate reductase (thioredoxin)"/>
    <property type="evidence" value="ECO:0007669"/>
    <property type="project" value="UniProtKB-UniRule"/>
</dbReference>
<dbReference type="CDD" id="cd23945">
    <property type="entry name" value="PAPS_reductase"/>
    <property type="match status" value="1"/>
</dbReference>
<dbReference type="FunFam" id="3.40.50.620:FF:000043">
    <property type="entry name" value="Phosphoadenosine phosphosulfate reductase"/>
    <property type="match status" value="1"/>
</dbReference>
<dbReference type="Gene3D" id="3.40.50.620">
    <property type="entry name" value="HUPs"/>
    <property type="match status" value="1"/>
</dbReference>
<dbReference type="HAMAP" id="MF_00063">
    <property type="entry name" value="CysH"/>
    <property type="match status" value="1"/>
</dbReference>
<dbReference type="InterPro" id="IPR004511">
    <property type="entry name" value="PAPS/APS_Rdtase"/>
</dbReference>
<dbReference type="InterPro" id="IPR002500">
    <property type="entry name" value="PAPS_reduct_dom"/>
</dbReference>
<dbReference type="InterPro" id="IPR011800">
    <property type="entry name" value="PAPS_reductase_CysH"/>
</dbReference>
<dbReference type="InterPro" id="IPR014729">
    <property type="entry name" value="Rossmann-like_a/b/a_fold"/>
</dbReference>
<dbReference type="NCBIfam" id="TIGR00434">
    <property type="entry name" value="cysH"/>
    <property type="match status" value="1"/>
</dbReference>
<dbReference type="NCBIfam" id="TIGR02057">
    <property type="entry name" value="PAPS_reductase"/>
    <property type="match status" value="1"/>
</dbReference>
<dbReference type="NCBIfam" id="NF002537">
    <property type="entry name" value="PRK02090.1"/>
    <property type="match status" value="1"/>
</dbReference>
<dbReference type="PANTHER" id="PTHR46509">
    <property type="entry name" value="PHOSPHOADENOSINE PHOSPHOSULFATE REDUCTASE"/>
    <property type="match status" value="1"/>
</dbReference>
<dbReference type="PANTHER" id="PTHR46509:SF1">
    <property type="entry name" value="PHOSPHOADENOSINE PHOSPHOSULFATE REDUCTASE"/>
    <property type="match status" value="1"/>
</dbReference>
<dbReference type="Pfam" id="PF01507">
    <property type="entry name" value="PAPS_reduct"/>
    <property type="match status" value="1"/>
</dbReference>
<dbReference type="PIRSF" id="PIRSF000857">
    <property type="entry name" value="PAPS_reductase"/>
    <property type="match status" value="1"/>
</dbReference>
<dbReference type="SUPFAM" id="SSF52402">
    <property type="entry name" value="Adenine nucleotide alpha hydrolases-like"/>
    <property type="match status" value="1"/>
</dbReference>